<comment type="catalytic activity">
    <reaction evidence="1">
        <text>tRNA(Phe) + L-phenylalanine + ATP = L-phenylalanyl-tRNA(Phe) + AMP + diphosphate + H(+)</text>
        <dbReference type="Rhea" id="RHEA:19413"/>
        <dbReference type="Rhea" id="RHEA-COMP:9668"/>
        <dbReference type="Rhea" id="RHEA-COMP:9699"/>
        <dbReference type="ChEBI" id="CHEBI:15378"/>
        <dbReference type="ChEBI" id="CHEBI:30616"/>
        <dbReference type="ChEBI" id="CHEBI:33019"/>
        <dbReference type="ChEBI" id="CHEBI:58095"/>
        <dbReference type="ChEBI" id="CHEBI:78442"/>
        <dbReference type="ChEBI" id="CHEBI:78531"/>
        <dbReference type="ChEBI" id="CHEBI:456215"/>
        <dbReference type="EC" id="6.1.1.20"/>
    </reaction>
</comment>
<comment type="cofactor">
    <cofactor evidence="1">
        <name>Mg(2+)</name>
        <dbReference type="ChEBI" id="CHEBI:18420"/>
    </cofactor>
    <text evidence="1">Binds 2 magnesium ions per tetramer.</text>
</comment>
<comment type="subunit">
    <text evidence="1">Tetramer of two alpha and two beta subunits.</text>
</comment>
<comment type="subcellular location">
    <subcellularLocation>
        <location evidence="1">Cytoplasm</location>
    </subcellularLocation>
</comment>
<comment type="similarity">
    <text evidence="1">Belongs to the phenylalanyl-tRNA synthetase beta subunit family. Type 1 subfamily.</text>
</comment>
<proteinExistence type="inferred from homology"/>
<accession>Q57PU8</accession>
<dbReference type="EC" id="6.1.1.20" evidence="1"/>
<dbReference type="EMBL" id="AE017220">
    <property type="protein sequence ID" value="AAX65263.1"/>
    <property type="molecule type" value="Genomic_DNA"/>
</dbReference>
<dbReference type="RefSeq" id="WP_001539879.1">
    <property type="nucleotide sequence ID" value="NC_006905.1"/>
</dbReference>
<dbReference type="SMR" id="Q57PU8"/>
<dbReference type="KEGG" id="sec:SCH_1357"/>
<dbReference type="HOGENOM" id="CLU_016891_0_0_6"/>
<dbReference type="Proteomes" id="UP000000538">
    <property type="component" value="Chromosome"/>
</dbReference>
<dbReference type="GO" id="GO:0009328">
    <property type="term" value="C:phenylalanine-tRNA ligase complex"/>
    <property type="evidence" value="ECO:0007669"/>
    <property type="project" value="TreeGrafter"/>
</dbReference>
<dbReference type="GO" id="GO:0005524">
    <property type="term" value="F:ATP binding"/>
    <property type="evidence" value="ECO:0007669"/>
    <property type="project" value="UniProtKB-UniRule"/>
</dbReference>
<dbReference type="GO" id="GO:0000287">
    <property type="term" value="F:magnesium ion binding"/>
    <property type="evidence" value="ECO:0007669"/>
    <property type="project" value="UniProtKB-UniRule"/>
</dbReference>
<dbReference type="GO" id="GO:0004826">
    <property type="term" value="F:phenylalanine-tRNA ligase activity"/>
    <property type="evidence" value="ECO:0007669"/>
    <property type="project" value="UniProtKB-UniRule"/>
</dbReference>
<dbReference type="GO" id="GO:0000049">
    <property type="term" value="F:tRNA binding"/>
    <property type="evidence" value="ECO:0007669"/>
    <property type="project" value="UniProtKB-KW"/>
</dbReference>
<dbReference type="GO" id="GO:0006432">
    <property type="term" value="P:phenylalanyl-tRNA aminoacylation"/>
    <property type="evidence" value="ECO:0007669"/>
    <property type="project" value="UniProtKB-UniRule"/>
</dbReference>
<dbReference type="CDD" id="cd00769">
    <property type="entry name" value="PheRS_beta_core"/>
    <property type="match status" value="1"/>
</dbReference>
<dbReference type="CDD" id="cd02796">
    <property type="entry name" value="tRNA_bind_bactPheRS"/>
    <property type="match status" value="1"/>
</dbReference>
<dbReference type="FunFam" id="2.40.50.140:FF:000045">
    <property type="entry name" value="Phenylalanine--tRNA ligase beta subunit"/>
    <property type="match status" value="1"/>
</dbReference>
<dbReference type="FunFam" id="3.30.56.10:FF:000002">
    <property type="entry name" value="Phenylalanine--tRNA ligase beta subunit"/>
    <property type="match status" value="1"/>
</dbReference>
<dbReference type="FunFam" id="3.30.70.380:FF:000001">
    <property type="entry name" value="Phenylalanine--tRNA ligase beta subunit"/>
    <property type="match status" value="1"/>
</dbReference>
<dbReference type="FunFam" id="3.30.930.10:FF:000022">
    <property type="entry name" value="Phenylalanine--tRNA ligase beta subunit"/>
    <property type="match status" value="1"/>
</dbReference>
<dbReference type="FunFam" id="3.50.40.10:FF:000001">
    <property type="entry name" value="Phenylalanine--tRNA ligase beta subunit"/>
    <property type="match status" value="1"/>
</dbReference>
<dbReference type="Gene3D" id="3.30.56.10">
    <property type="match status" value="2"/>
</dbReference>
<dbReference type="Gene3D" id="3.30.930.10">
    <property type="entry name" value="Bira Bifunctional Protein, Domain 2"/>
    <property type="match status" value="1"/>
</dbReference>
<dbReference type="Gene3D" id="3.30.70.380">
    <property type="entry name" value="Ferrodoxin-fold anticodon-binding domain"/>
    <property type="match status" value="1"/>
</dbReference>
<dbReference type="Gene3D" id="2.40.50.140">
    <property type="entry name" value="Nucleic acid-binding proteins"/>
    <property type="match status" value="1"/>
</dbReference>
<dbReference type="Gene3D" id="3.50.40.10">
    <property type="entry name" value="Phenylalanyl-trna Synthetase, Chain B, domain 3"/>
    <property type="match status" value="1"/>
</dbReference>
<dbReference type="HAMAP" id="MF_00283">
    <property type="entry name" value="Phe_tRNA_synth_beta1"/>
    <property type="match status" value="1"/>
</dbReference>
<dbReference type="InterPro" id="IPR045864">
    <property type="entry name" value="aa-tRNA-synth_II/BPL/LPL"/>
</dbReference>
<dbReference type="InterPro" id="IPR005146">
    <property type="entry name" value="B3/B4_tRNA-bd"/>
</dbReference>
<dbReference type="InterPro" id="IPR009061">
    <property type="entry name" value="DNA-bd_dom_put_sf"/>
</dbReference>
<dbReference type="InterPro" id="IPR005121">
    <property type="entry name" value="Fdx_antiC-bd"/>
</dbReference>
<dbReference type="InterPro" id="IPR036690">
    <property type="entry name" value="Fdx_antiC-bd_sf"/>
</dbReference>
<dbReference type="InterPro" id="IPR012340">
    <property type="entry name" value="NA-bd_OB-fold"/>
</dbReference>
<dbReference type="InterPro" id="IPR045060">
    <property type="entry name" value="Phe-tRNA-ligase_IIc_bsu"/>
</dbReference>
<dbReference type="InterPro" id="IPR004532">
    <property type="entry name" value="Phe-tRNA-ligase_IIc_bsu_bact"/>
</dbReference>
<dbReference type="InterPro" id="IPR020825">
    <property type="entry name" value="Phe-tRNA_synthase-like_B3/B4"/>
</dbReference>
<dbReference type="InterPro" id="IPR041616">
    <property type="entry name" value="PheRS_beta_core"/>
</dbReference>
<dbReference type="InterPro" id="IPR002547">
    <property type="entry name" value="tRNA-bd_dom"/>
</dbReference>
<dbReference type="InterPro" id="IPR033714">
    <property type="entry name" value="tRNA_bind_bactPheRS"/>
</dbReference>
<dbReference type="InterPro" id="IPR005147">
    <property type="entry name" value="tRNA_synthase_B5-dom"/>
</dbReference>
<dbReference type="NCBIfam" id="TIGR00472">
    <property type="entry name" value="pheT_bact"/>
    <property type="match status" value="1"/>
</dbReference>
<dbReference type="NCBIfam" id="NF045760">
    <property type="entry name" value="YtpR"/>
    <property type="match status" value="1"/>
</dbReference>
<dbReference type="PANTHER" id="PTHR10947:SF0">
    <property type="entry name" value="PHENYLALANINE--TRNA LIGASE BETA SUBUNIT"/>
    <property type="match status" value="1"/>
</dbReference>
<dbReference type="PANTHER" id="PTHR10947">
    <property type="entry name" value="PHENYLALANYL-TRNA SYNTHETASE BETA CHAIN AND LEUCINE-RICH REPEAT-CONTAINING PROTEIN 47"/>
    <property type="match status" value="1"/>
</dbReference>
<dbReference type="Pfam" id="PF03483">
    <property type="entry name" value="B3_4"/>
    <property type="match status" value="1"/>
</dbReference>
<dbReference type="Pfam" id="PF03484">
    <property type="entry name" value="B5"/>
    <property type="match status" value="1"/>
</dbReference>
<dbReference type="Pfam" id="PF03147">
    <property type="entry name" value="FDX-ACB"/>
    <property type="match status" value="1"/>
</dbReference>
<dbReference type="Pfam" id="PF01588">
    <property type="entry name" value="tRNA_bind"/>
    <property type="match status" value="1"/>
</dbReference>
<dbReference type="Pfam" id="PF17759">
    <property type="entry name" value="tRNA_synthFbeta"/>
    <property type="match status" value="1"/>
</dbReference>
<dbReference type="SMART" id="SM00873">
    <property type="entry name" value="B3_4"/>
    <property type="match status" value="1"/>
</dbReference>
<dbReference type="SMART" id="SM00874">
    <property type="entry name" value="B5"/>
    <property type="match status" value="1"/>
</dbReference>
<dbReference type="SMART" id="SM00896">
    <property type="entry name" value="FDX-ACB"/>
    <property type="match status" value="1"/>
</dbReference>
<dbReference type="SUPFAM" id="SSF54991">
    <property type="entry name" value="Anticodon-binding domain of PheRS"/>
    <property type="match status" value="1"/>
</dbReference>
<dbReference type="SUPFAM" id="SSF55681">
    <property type="entry name" value="Class II aaRS and biotin synthetases"/>
    <property type="match status" value="1"/>
</dbReference>
<dbReference type="SUPFAM" id="SSF50249">
    <property type="entry name" value="Nucleic acid-binding proteins"/>
    <property type="match status" value="1"/>
</dbReference>
<dbReference type="SUPFAM" id="SSF56037">
    <property type="entry name" value="PheT/TilS domain"/>
    <property type="match status" value="1"/>
</dbReference>
<dbReference type="SUPFAM" id="SSF46955">
    <property type="entry name" value="Putative DNA-binding domain"/>
    <property type="match status" value="1"/>
</dbReference>
<dbReference type="PROSITE" id="PS51483">
    <property type="entry name" value="B5"/>
    <property type="match status" value="1"/>
</dbReference>
<dbReference type="PROSITE" id="PS51447">
    <property type="entry name" value="FDX_ACB"/>
    <property type="match status" value="1"/>
</dbReference>
<dbReference type="PROSITE" id="PS50886">
    <property type="entry name" value="TRBD"/>
    <property type="match status" value="1"/>
</dbReference>
<organism>
    <name type="scientific">Salmonella choleraesuis (strain SC-B67)</name>
    <dbReference type="NCBI Taxonomy" id="321314"/>
    <lineage>
        <taxon>Bacteria</taxon>
        <taxon>Pseudomonadati</taxon>
        <taxon>Pseudomonadota</taxon>
        <taxon>Gammaproteobacteria</taxon>
        <taxon>Enterobacterales</taxon>
        <taxon>Enterobacteriaceae</taxon>
        <taxon>Salmonella</taxon>
    </lineage>
</organism>
<keyword id="KW-0030">Aminoacyl-tRNA synthetase</keyword>
<keyword id="KW-0067">ATP-binding</keyword>
<keyword id="KW-0963">Cytoplasm</keyword>
<keyword id="KW-0436">Ligase</keyword>
<keyword id="KW-0460">Magnesium</keyword>
<keyword id="KW-0479">Metal-binding</keyword>
<keyword id="KW-0547">Nucleotide-binding</keyword>
<keyword id="KW-0648">Protein biosynthesis</keyword>
<keyword id="KW-0694">RNA-binding</keyword>
<keyword id="KW-0820">tRNA-binding</keyword>
<sequence>MKFSELWLREWVNPAIDSDALANQITMAGLEVDGVEPVAGSFNGVVVGEVVECAQHPNADKLRVTKVNVGGERLLDIVCGAPNCRQGLKVAVATIGAILPGDFKIKAAKLRGEPSEGVLCSFSELGISDDHSGIIELPADAPLGTDIREYLKLDDNTIEISVTPNRADCLGIIGVARDVAVLNKAPLQELEMAPVTATISDTLPITVEAADACPRYLGRVVKGINVNAPTPLWMKEKLRRCGIRSIDAVVDVTNYVLLELGQPMHAFDKDRIDGGIVVRMAKEGETVVLLDGSEATLNADTLVIADHHKALGIAGIFGGEHSGVNGETQNVLLECAYFNPLSITGRARRHGLHTDASHRYERGVDPALQYKAIERATRLLLDICGGDAGPIIDVSNEATLPKRATITLRRSKLDRLIGHHIADEQVSDILRRLGCEVTEGQDEWKAVAPTWRFDMEIEEDLVEEVARVYGYNNIPDEPIQAGLIMGTHREADLSLKRVKTMLNDKGYQEVITYSFVDPKVQQLIHPGAEALLLPNPISVEMSAMRLSLWSGLLATVVYNQNRQQNRVRIFETGLRFVPDTQANLGIRQDLMLAGVICGNRYDEHWNLAKETVDFYDLKGDLEAVLDLTGKLGDIQFKAEMNPALHPGQSAAIYLKDERIGFIGVVHPELERKLDLNGRTLVFELEWNKLADRIVPQAREISRFPANRRDIAVVVAENVPAADILSECKKVGVNQVVGVNLFDVYRGKGVAEGYKSLAISLILQDTNRTLEEEEIAATVAKCVEALKERFQASLRD</sequence>
<reference key="1">
    <citation type="journal article" date="2005" name="Nucleic Acids Res.">
        <title>The genome sequence of Salmonella enterica serovar Choleraesuis, a highly invasive and resistant zoonotic pathogen.</title>
        <authorList>
            <person name="Chiu C.-H."/>
            <person name="Tang P."/>
            <person name="Chu C."/>
            <person name="Hu S."/>
            <person name="Bao Q."/>
            <person name="Yu J."/>
            <person name="Chou Y.-Y."/>
            <person name="Wang H.-S."/>
            <person name="Lee Y.-S."/>
        </authorList>
    </citation>
    <scope>NUCLEOTIDE SEQUENCE [LARGE SCALE GENOMIC DNA]</scope>
    <source>
        <strain>SC-B67</strain>
    </source>
</reference>
<gene>
    <name evidence="1" type="primary">pheT</name>
    <name type="ordered locus">SCH_1357</name>
</gene>
<feature type="chain" id="PRO_0000232085" description="Phenylalanine--tRNA ligase beta subunit">
    <location>
        <begin position="1"/>
        <end position="795"/>
    </location>
</feature>
<feature type="domain" description="tRNA-binding" evidence="1">
    <location>
        <begin position="39"/>
        <end position="148"/>
    </location>
</feature>
<feature type="domain" description="B5" evidence="1">
    <location>
        <begin position="401"/>
        <end position="476"/>
    </location>
</feature>
<feature type="domain" description="FDX-ACB" evidence="1">
    <location>
        <begin position="701"/>
        <end position="794"/>
    </location>
</feature>
<feature type="binding site" evidence="1">
    <location>
        <position position="454"/>
    </location>
    <ligand>
        <name>Mg(2+)</name>
        <dbReference type="ChEBI" id="CHEBI:18420"/>
        <note>shared with alpha subunit</note>
    </ligand>
</feature>
<feature type="binding site" evidence="1">
    <location>
        <position position="460"/>
    </location>
    <ligand>
        <name>Mg(2+)</name>
        <dbReference type="ChEBI" id="CHEBI:18420"/>
        <note>shared with alpha subunit</note>
    </ligand>
</feature>
<feature type="binding site" evidence="1">
    <location>
        <position position="463"/>
    </location>
    <ligand>
        <name>Mg(2+)</name>
        <dbReference type="ChEBI" id="CHEBI:18420"/>
        <note>shared with alpha subunit</note>
    </ligand>
</feature>
<feature type="binding site" evidence="1">
    <location>
        <position position="464"/>
    </location>
    <ligand>
        <name>Mg(2+)</name>
        <dbReference type="ChEBI" id="CHEBI:18420"/>
        <note>shared with alpha subunit</note>
    </ligand>
</feature>
<protein>
    <recommendedName>
        <fullName evidence="1">Phenylalanine--tRNA ligase beta subunit</fullName>
        <ecNumber evidence="1">6.1.1.20</ecNumber>
    </recommendedName>
    <alternativeName>
        <fullName evidence="1">Phenylalanyl-tRNA synthetase beta subunit</fullName>
        <shortName evidence="1">PheRS</shortName>
    </alternativeName>
</protein>
<evidence type="ECO:0000255" key="1">
    <source>
        <dbReference type="HAMAP-Rule" id="MF_00283"/>
    </source>
</evidence>
<name>SYFB_SALCH</name>